<gene>
    <name evidence="1" type="primary">gatB</name>
    <name type="ordered locus">pc0669</name>
</gene>
<feature type="chain" id="PRO_0000241250" description="Aspartyl/glutamyl-tRNA(Asn/Gln) amidotransferase subunit B">
    <location>
        <begin position="1"/>
        <end position="494"/>
    </location>
</feature>
<dbReference type="EC" id="6.3.5.-" evidence="1"/>
<dbReference type="EMBL" id="BX908798">
    <property type="protein sequence ID" value="CAF23393.1"/>
    <property type="molecule type" value="Genomic_DNA"/>
</dbReference>
<dbReference type="RefSeq" id="WP_011175219.1">
    <property type="nucleotide sequence ID" value="NC_005861.2"/>
</dbReference>
<dbReference type="SMR" id="Q6MDF6"/>
<dbReference type="STRING" id="264201.pc0669"/>
<dbReference type="KEGG" id="pcu:PC_RS03205"/>
<dbReference type="eggNOG" id="COG0064">
    <property type="taxonomic scope" value="Bacteria"/>
</dbReference>
<dbReference type="HOGENOM" id="CLU_019240_0_0_0"/>
<dbReference type="OrthoDB" id="9804078at2"/>
<dbReference type="Proteomes" id="UP000000529">
    <property type="component" value="Chromosome"/>
</dbReference>
<dbReference type="GO" id="GO:0050566">
    <property type="term" value="F:asparaginyl-tRNA synthase (glutamine-hydrolyzing) activity"/>
    <property type="evidence" value="ECO:0007669"/>
    <property type="project" value="RHEA"/>
</dbReference>
<dbReference type="GO" id="GO:0005524">
    <property type="term" value="F:ATP binding"/>
    <property type="evidence" value="ECO:0007669"/>
    <property type="project" value="UniProtKB-KW"/>
</dbReference>
<dbReference type="GO" id="GO:0050567">
    <property type="term" value="F:glutaminyl-tRNA synthase (glutamine-hydrolyzing) activity"/>
    <property type="evidence" value="ECO:0007669"/>
    <property type="project" value="UniProtKB-UniRule"/>
</dbReference>
<dbReference type="GO" id="GO:0070681">
    <property type="term" value="P:glutaminyl-tRNAGln biosynthesis via transamidation"/>
    <property type="evidence" value="ECO:0007669"/>
    <property type="project" value="TreeGrafter"/>
</dbReference>
<dbReference type="GO" id="GO:0006412">
    <property type="term" value="P:translation"/>
    <property type="evidence" value="ECO:0007669"/>
    <property type="project" value="UniProtKB-UniRule"/>
</dbReference>
<dbReference type="FunFam" id="1.10.10.410:FF:000001">
    <property type="entry name" value="Aspartyl/glutamyl-tRNA(Asn/Gln) amidotransferase subunit B"/>
    <property type="match status" value="1"/>
</dbReference>
<dbReference type="Gene3D" id="1.10.10.410">
    <property type="match status" value="1"/>
</dbReference>
<dbReference type="Gene3D" id="1.10.150.380">
    <property type="entry name" value="GatB domain, N-terminal subdomain"/>
    <property type="match status" value="1"/>
</dbReference>
<dbReference type="HAMAP" id="MF_00121">
    <property type="entry name" value="GatB"/>
    <property type="match status" value="1"/>
</dbReference>
<dbReference type="InterPro" id="IPR017959">
    <property type="entry name" value="Asn/Gln-tRNA_amidoTrfase_suB/E"/>
</dbReference>
<dbReference type="InterPro" id="IPR006075">
    <property type="entry name" value="Asn/Gln-tRNA_Trfase_suB/E_cat"/>
</dbReference>
<dbReference type="InterPro" id="IPR018027">
    <property type="entry name" value="Asn/Gln_amidotransferase"/>
</dbReference>
<dbReference type="InterPro" id="IPR003789">
    <property type="entry name" value="Asn/Gln_tRNA_amidoTrase-B-like"/>
</dbReference>
<dbReference type="InterPro" id="IPR004413">
    <property type="entry name" value="GatB"/>
</dbReference>
<dbReference type="InterPro" id="IPR042114">
    <property type="entry name" value="GatB_C_1"/>
</dbReference>
<dbReference type="InterPro" id="IPR023168">
    <property type="entry name" value="GatB_Yqey_C_2"/>
</dbReference>
<dbReference type="InterPro" id="IPR017958">
    <property type="entry name" value="Gln-tRNA_amidoTrfase_suB_CS"/>
</dbReference>
<dbReference type="InterPro" id="IPR014746">
    <property type="entry name" value="Gln_synth/guanido_kin_cat_dom"/>
</dbReference>
<dbReference type="NCBIfam" id="TIGR00133">
    <property type="entry name" value="gatB"/>
    <property type="match status" value="1"/>
</dbReference>
<dbReference type="NCBIfam" id="NF004012">
    <property type="entry name" value="PRK05477.1-2"/>
    <property type="match status" value="1"/>
</dbReference>
<dbReference type="NCBIfam" id="NF004014">
    <property type="entry name" value="PRK05477.1-4"/>
    <property type="match status" value="1"/>
</dbReference>
<dbReference type="PANTHER" id="PTHR11659">
    <property type="entry name" value="GLUTAMYL-TRNA GLN AMIDOTRANSFERASE SUBUNIT B MITOCHONDRIAL AND PROKARYOTIC PET112-RELATED"/>
    <property type="match status" value="1"/>
</dbReference>
<dbReference type="PANTHER" id="PTHR11659:SF0">
    <property type="entry name" value="GLUTAMYL-TRNA(GLN) AMIDOTRANSFERASE SUBUNIT B, MITOCHONDRIAL"/>
    <property type="match status" value="1"/>
</dbReference>
<dbReference type="Pfam" id="PF02934">
    <property type="entry name" value="GatB_N"/>
    <property type="match status" value="1"/>
</dbReference>
<dbReference type="Pfam" id="PF02637">
    <property type="entry name" value="GatB_Yqey"/>
    <property type="match status" value="1"/>
</dbReference>
<dbReference type="SMART" id="SM00845">
    <property type="entry name" value="GatB_Yqey"/>
    <property type="match status" value="1"/>
</dbReference>
<dbReference type="SUPFAM" id="SSF89095">
    <property type="entry name" value="GatB/YqeY motif"/>
    <property type="match status" value="1"/>
</dbReference>
<dbReference type="SUPFAM" id="SSF55931">
    <property type="entry name" value="Glutamine synthetase/guanido kinase"/>
    <property type="match status" value="1"/>
</dbReference>
<dbReference type="PROSITE" id="PS01234">
    <property type="entry name" value="GATB"/>
    <property type="match status" value="1"/>
</dbReference>
<evidence type="ECO:0000255" key="1">
    <source>
        <dbReference type="HAMAP-Rule" id="MF_00121"/>
    </source>
</evidence>
<organism>
    <name type="scientific">Protochlamydia amoebophila (strain UWE25)</name>
    <dbReference type="NCBI Taxonomy" id="264201"/>
    <lineage>
        <taxon>Bacteria</taxon>
        <taxon>Pseudomonadati</taxon>
        <taxon>Chlamydiota</taxon>
        <taxon>Chlamydiia</taxon>
        <taxon>Parachlamydiales</taxon>
        <taxon>Parachlamydiaceae</taxon>
        <taxon>Candidatus Protochlamydia</taxon>
    </lineage>
</organism>
<comment type="function">
    <text evidence="1">Allows the formation of correctly charged Asn-tRNA(Asn) or Gln-tRNA(Gln) through the transamidation of misacylated Asp-tRNA(Asn) or Glu-tRNA(Gln) in organisms which lack either or both of asparaginyl-tRNA or glutaminyl-tRNA synthetases. The reaction takes place in the presence of glutamine and ATP through an activated phospho-Asp-tRNA(Asn) or phospho-Glu-tRNA(Gln).</text>
</comment>
<comment type="catalytic activity">
    <reaction evidence="1">
        <text>L-glutamyl-tRNA(Gln) + L-glutamine + ATP + H2O = L-glutaminyl-tRNA(Gln) + L-glutamate + ADP + phosphate + H(+)</text>
        <dbReference type="Rhea" id="RHEA:17521"/>
        <dbReference type="Rhea" id="RHEA-COMP:9681"/>
        <dbReference type="Rhea" id="RHEA-COMP:9684"/>
        <dbReference type="ChEBI" id="CHEBI:15377"/>
        <dbReference type="ChEBI" id="CHEBI:15378"/>
        <dbReference type="ChEBI" id="CHEBI:29985"/>
        <dbReference type="ChEBI" id="CHEBI:30616"/>
        <dbReference type="ChEBI" id="CHEBI:43474"/>
        <dbReference type="ChEBI" id="CHEBI:58359"/>
        <dbReference type="ChEBI" id="CHEBI:78520"/>
        <dbReference type="ChEBI" id="CHEBI:78521"/>
        <dbReference type="ChEBI" id="CHEBI:456216"/>
    </reaction>
</comment>
<comment type="catalytic activity">
    <reaction evidence="1">
        <text>L-aspartyl-tRNA(Asn) + L-glutamine + ATP + H2O = L-asparaginyl-tRNA(Asn) + L-glutamate + ADP + phosphate + 2 H(+)</text>
        <dbReference type="Rhea" id="RHEA:14513"/>
        <dbReference type="Rhea" id="RHEA-COMP:9674"/>
        <dbReference type="Rhea" id="RHEA-COMP:9677"/>
        <dbReference type="ChEBI" id="CHEBI:15377"/>
        <dbReference type="ChEBI" id="CHEBI:15378"/>
        <dbReference type="ChEBI" id="CHEBI:29985"/>
        <dbReference type="ChEBI" id="CHEBI:30616"/>
        <dbReference type="ChEBI" id="CHEBI:43474"/>
        <dbReference type="ChEBI" id="CHEBI:58359"/>
        <dbReference type="ChEBI" id="CHEBI:78515"/>
        <dbReference type="ChEBI" id="CHEBI:78516"/>
        <dbReference type="ChEBI" id="CHEBI:456216"/>
    </reaction>
</comment>
<comment type="subunit">
    <text evidence="1">Heterotrimer of A, B and C subunits.</text>
</comment>
<comment type="similarity">
    <text evidence="1">Belongs to the GatB/GatE family. GatB subfamily.</text>
</comment>
<keyword id="KW-0067">ATP-binding</keyword>
<keyword id="KW-0436">Ligase</keyword>
<keyword id="KW-0547">Nucleotide-binding</keyword>
<keyword id="KW-0648">Protein biosynthesis</keyword>
<keyword id="KW-1185">Reference proteome</keyword>
<accession>Q6MDF6</accession>
<name>GATB_PARUW</name>
<proteinExistence type="inferred from homology"/>
<sequence length="494" mass="55379">MSHKYSHPSHSDWEAVIGLEIHVELNTKSKLFSVAPNHFGDEPNTNITEVCTGMPGSLPVLNKEAVRKAVQFGCAIQAEVAKFSKFDRKSYFYPDSPRNFQITQYDQPIVKGGTVIAEVNGKEKSFAVNRVHLEDDAGMLKHFSTFAGVDYNRAGSPLIEIVSEPCIHTPEEAVAYAMAIKAILQYIDASDCNMEEGSLRIDTNISVRLKGEQGLRNKIEIKNMNSFSFMELAIKSEINRQIQAYLSHPTKPHDQIIAQATYRWDPEKQETVLMRRKESADDYRYFPEPDLVPIILTDSYIEEIRQSLPELPLQRERRYTKEMGLSAHQAFALTSDKALADYFEEALKTCSNSRSLSNWLLVEFPGRLKEGGQNVKSINLPPSHIASLINLIEKGTITGKIAKSVADEMVAQPGKDPAEIVAGNPDYQPLNDQNEVERYVDQVLAENNQSIVDYRAGRDKAFAYLVGQVMKLCKGKASPSLVNELLKQKIANLP</sequence>
<reference key="1">
    <citation type="journal article" date="2004" name="Science">
        <title>Illuminating the evolutionary history of chlamydiae.</title>
        <authorList>
            <person name="Horn M."/>
            <person name="Collingro A."/>
            <person name="Schmitz-Esser S."/>
            <person name="Beier C.L."/>
            <person name="Purkhold U."/>
            <person name="Fartmann B."/>
            <person name="Brandt P."/>
            <person name="Nyakatura G.J."/>
            <person name="Droege M."/>
            <person name="Frishman D."/>
            <person name="Rattei T."/>
            <person name="Mewes H.-W."/>
            <person name="Wagner M."/>
        </authorList>
    </citation>
    <scope>NUCLEOTIDE SEQUENCE [LARGE SCALE GENOMIC DNA]</scope>
    <source>
        <strain>UWE25</strain>
    </source>
</reference>
<protein>
    <recommendedName>
        <fullName evidence="1">Aspartyl/glutamyl-tRNA(Asn/Gln) amidotransferase subunit B</fullName>
        <shortName evidence="1">Asp/Glu-ADT subunit B</shortName>
        <ecNumber evidence="1">6.3.5.-</ecNumber>
    </recommendedName>
</protein>